<protein>
    <recommendedName>
        <fullName>Plipastatin synthase subunit D</fullName>
        <ecNumber>2.3.1.-</ecNumber>
    </recommendedName>
    <alternativeName>
        <fullName>Peptide synthase 4</fullName>
    </alternativeName>
    <domain>
        <recommendedName>
            <fullName>ATP-dependent proline adenylase</fullName>
            <shortName>ProA 1</shortName>
        </recommendedName>
        <alternativeName>
            <fullName>Proline activase 1</fullName>
        </alternativeName>
    </domain>
    <domain>
        <recommendedName>
            <fullName>ATP-dependent glutamine adenylase</fullName>
            <shortName>GlnA</shortName>
        </recommendedName>
        <alternativeName>
            <fullName>Glutamine activase</fullName>
        </alternativeName>
    </domain>
    <domain>
        <recommendedName>
            <fullName>ATP-dependent tyrosine adenylase 2</fullName>
            <shortName>TyrA 2</shortName>
        </recommendedName>
        <alternativeName>
            <fullName>Tyrosine activase 2</fullName>
        </alternativeName>
    </domain>
</protein>
<reference key="1">
    <citation type="journal article" date="1995" name="Microbiology">
        <title>A putative new peptide synthase operon in Bacillus subtilis: partial characterization.</title>
        <authorList>
            <person name="Tognoni A."/>
            <person name="Franchi E."/>
            <person name="Magistrelli C."/>
            <person name="Colombo E."/>
            <person name="Cosmina P."/>
            <person name="Grandi G."/>
        </authorList>
    </citation>
    <scope>NUCLEOTIDE SEQUENCE [GENOMIC DNA]</scope>
    <source>
        <strain>168</strain>
    </source>
</reference>
<reference key="2">
    <citation type="submission" date="1997-01" db="EMBL/GenBank/DDBJ databases">
        <authorList>
            <person name="de Ferra F."/>
            <person name="Tognoni A."/>
        </authorList>
    </citation>
    <scope>NUCLEOTIDE SEQUENCE [GENOMIC DNA]</scope>
    <source>
        <strain>168</strain>
    </source>
</reference>
<reference key="3">
    <citation type="journal article" date="1997" name="Nature">
        <title>The complete genome sequence of the Gram-positive bacterium Bacillus subtilis.</title>
        <authorList>
            <person name="Kunst F."/>
            <person name="Ogasawara N."/>
            <person name="Moszer I."/>
            <person name="Albertini A.M."/>
            <person name="Alloni G."/>
            <person name="Azevedo V."/>
            <person name="Bertero M.G."/>
            <person name="Bessieres P."/>
            <person name="Bolotin A."/>
            <person name="Borchert S."/>
            <person name="Borriss R."/>
            <person name="Boursier L."/>
            <person name="Brans A."/>
            <person name="Braun M."/>
            <person name="Brignell S.C."/>
            <person name="Bron S."/>
            <person name="Brouillet S."/>
            <person name="Bruschi C.V."/>
            <person name="Caldwell B."/>
            <person name="Capuano V."/>
            <person name="Carter N.M."/>
            <person name="Choi S.-K."/>
            <person name="Codani J.-J."/>
            <person name="Connerton I.F."/>
            <person name="Cummings N.J."/>
            <person name="Daniel R.A."/>
            <person name="Denizot F."/>
            <person name="Devine K.M."/>
            <person name="Duesterhoeft A."/>
            <person name="Ehrlich S.D."/>
            <person name="Emmerson P.T."/>
            <person name="Entian K.-D."/>
            <person name="Errington J."/>
            <person name="Fabret C."/>
            <person name="Ferrari E."/>
            <person name="Foulger D."/>
            <person name="Fritz C."/>
            <person name="Fujita M."/>
            <person name="Fujita Y."/>
            <person name="Fuma S."/>
            <person name="Galizzi A."/>
            <person name="Galleron N."/>
            <person name="Ghim S.-Y."/>
            <person name="Glaser P."/>
            <person name="Goffeau A."/>
            <person name="Golightly E.J."/>
            <person name="Grandi G."/>
            <person name="Guiseppi G."/>
            <person name="Guy B.J."/>
            <person name="Haga K."/>
            <person name="Haiech J."/>
            <person name="Harwood C.R."/>
            <person name="Henaut A."/>
            <person name="Hilbert H."/>
            <person name="Holsappel S."/>
            <person name="Hosono S."/>
            <person name="Hullo M.-F."/>
            <person name="Itaya M."/>
            <person name="Jones L.-M."/>
            <person name="Joris B."/>
            <person name="Karamata D."/>
            <person name="Kasahara Y."/>
            <person name="Klaerr-Blanchard M."/>
            <person name="Klein C."/>
            <person name="Kobayashi Y."/>
            <person name="Koetter P."/>
            <person name="Koningstein G."/>
            <person name="Krogh S."/>
            <person name="Kumano M."/>
            <person name="Kurita K."/>
            <person name="Lapidus A."/>
            <person name="Lardinois S."/>
            <person name="Lauber J."/>
            <person name="Lazarevic V."/>
            <person name="Lee S.-M."/>
            <person name="Levine A."/>
            <person name="Liu H."/>
            <person name="Masuda S."/>
            <person name="Mauel C."/>
            <person name="Medigue C."/>
            <person name="Medina N."/>
            <person name="Mellado R.P."/>
            <person name="Mizuno M."/>
            <person name="Moestl D."/>
            <person name="Nakai S."/>
            <person name="Noback M."/>
            <person name="Noone D."/>
            <person name="O'Reilly M."/>
            <person name="Ogawa K."/>
            <person name="Ogiwara A."/>
            <person name="Oudega B."/>
            <person name="Park S.-H."/>
            <person name="Parro V."/>
            <person name="Pohl T.M."/>
            <person name="Portetelle D."/>
            <person name="Porwollik S."/>
            <person name="Prescott A.M."/>
            <person name="Presecan E."/>
            <person name="Pujic P."/>
            <person name="Purnelle B."/>
            <person name="Rapoport G."/>
            <person name="Rey M."/>
            <person name="Reynolds S."/>
            <person name="Rieger M."/>
            <person name="Rivolta C."/>
            <person name="Rocha E."/>
            <person name="Roche B."/>
            <person name="Rose M."/>
            <person name="Sadaie Y."/>
            <person name="Sato T."/>
            <person name="Scanlan E."/>
            <person name="Schleich S."/>
            <person name="Schroeter R."/>
            <person name="Scoffone F."/>
            <person name="Sekiguchi J."/>
            <person name="Sekowska A."/>
            <person name="Seror S.J."/>
            <person name="Serror P."/>
            <person name="Shin B.-S."/>
            <person name="Soldo B."/>
            <person name="Sorokin A."/>
            <person name="Tacconi E."/>
            <person name="Takagi T."/>
            <person name="Takahashi H."/>
            <person name="Takemaru K."/>
            <person name="Takeuchi M."/>
            <person name="Tamakoshi A."/>
            <person name="Tanaka T."/>
            <person name="Terpstra P."/>
            <person name="Tognoni A."/>
            <person name="Tosato V."/>
            <person name="Uchiyama S."/>
            <person name="Vandenbol M."/>
            <person name="Vannier F."/>
            <person name="Vassarotti A."/>
            <person name="Viari A."/>
            <person name="Wambutt R."/>
            <person name="Wedler E."/>
            <person name="Wedler H."/>
            <person name="Weitzenegger T."/>
            <person name="Winters P."/>
            <person name="Wipat A."/>
            <person name="Yamamoto H."/>
            <person name="Yamane K."/>
            <person name="Yasumoto K."/>
            <person name="Yata K."/>
            <person name="Yoshida K."/>
            <person name="Yoshikawa H.-F."/>
            <person name="Zumstein E."/>
            <person name="Yoshikawa H."/>
            <person name="Danchin A."/>
        </authorList>
    </citation>
    <scope>NUCLEOTIDE SEQUENCE [LARGE SCALE GENOMIC DNA]</scope>
    <source>
        <strain>168</strain>
    </source>
</reference>
<reference key="4">
    <citation type="journal article" date="2009" name="Microbiology">
        <title>From a consortium sequence to a unified sequence: the Bacillus subtilis 168 reference genome a decade later.</title>
        <authorList>
            <person name="Barbe V."/>
            <person name="Cruveiller S."/>
            <person name="Kunst F."/>
            <person name="Lenoble P."/>
            <person name="Meurice G."/>
            <person name="Sekowska A."/>
            <person name="Vallenet D."/>
            <person name="Wang T."/>
            <person name="Moszer I."/>
            <person name="Medigue C."/>
            <person name="Danchin A."/>
        </authorList>
    </citation>
    <scope>SEQUENCE REVISION TO 46; 1293; 1303; 1324; 1530; 1533 AND 1743</scope>
</reference>
<reference key="5">
    <citation type="journal article" date="1999" name="Antimicrob. Agents Chemother.">
        <title>The genes degQ, pps, and lpa-8 (sfp) are responsible for conversion of Bacillus subtilis 168 to plipastatin production.</title>
        <authorList>
            <person name="Tsuge K."/>
            <person name="Ano T."/>
            <person name="Hirai M."/>
            <person name="Nakamura Y."/>
            <person name="Shoda M."/>
        </authorList>
    </citation>
    <scope>FUNCTION IN PLIPASTATIN BIOSYNTHESIS</scope>
</reference>
<accession>P94459</accession>
<accession>Q796G3</accession>
<gene>
    <name type="primary">ppsD</name>
    <name type="synonym">pps4</name>
    <name type="ordered locus">BSU18310</name>
</gene>
<name>PPSD_BACSU</name>
<evidence type="ECO:0000255" key="1">
    <source>
        <dbReference type="PROSITE-ProRule" id="PRU00258"/>
    </source>
</evidence>
<evidence type="ECO:0000269" key="2">
    <source>
    </source>
</evidence>
<evidence type="ECO:0000305" key="3"/>
<proteinExistence type="evidence at protein level"/>
<organism>
    <name type="scientific">Bacillus subtilis (strain 168)</name>
    <dbReference type="NCBI Taxonomy" id="224308"/>
    <lineage>
        <taxon>Bacteria</taxon>
        <taxon>Bacillati</taxon>
        <taxon>Bacillota</taxon>
        <taxon>Bacilli</taxon>
        <taxon>Bacillales</taxon>
        <taxon>Bacillaceae</taxon>
        <taxon>Bacillus</taxon>
    </lineage>
</organism>
<feature type="chain" id="PRO_0000360844" description="Plipastatin synthase subunit D">
    <location>
        <begin position="1"/>
        <end position="3603"/>
    </location>
</feature>
<feature type="domain" description="Carrier 1" evidence="1">
    <location>
        <begin position="966"/>
        <end position="1041"/>
    </location>
</feature>
<feature type="domain" description="Carrier 2" evidence="1">
    <location>
        <begin position="1997"/>
        <end position="2072"/>
    </location>
</feature>
<feature type="domain" description="Carrier 3" evidence="1">
    <location>
        <begin position="3034"/>
        <end position="3108"/>
    </location>
</feature>
<feature type="region of interest" description="Domain 1 (proline-activating)">
    <location>
        <begin position="7"/>
        <end position="1043"/>
    </location>
</feature>
<feature type="region of interest" description="Condensation 1">
    <location>
        <begin position="7"/>
        <end position="306"/>
    </location>
</feature>
<feature type="region of interest" description="Adenylation 1">
    <location>
        <begin position="490"/>
        <end position="889"/>
    </location>
</feature>
<feature type="region of interest" description="Domain 2 (glutamine-activating)">
    <location>
        <begin position="1053"/>
        <end position="2069"/>
    </location>
</feature>
<feature type="region of interest" description="Condensation 2">
    <location>
        <begin position="1053"/>
        <end position="1334"/>
    </location>
</feature>
<feature type="region of interest" description="Adenylation 2">
    <location>
        <begin position="1521"/>
        <end position="1924"/>
    </location>
</feature>
<feature type="region of interest" description="Domain 3 (proline-activating)">
    <location>
        <begin position="2084"/>
        <end position="3596"/>
    </location>
</feature>
<feature type="region of interest" description="Condensation 3">
    <location>
        <begin position="2084"/>
        <end position="2374"/>
    </location>
</feature>
<feature type="region of interest" description="Adenylation 3">
    <location>
        <begin position="2560"/>
        <end position="2956"/>
    </location>
</feature>
<feature type="region of interest" description="Epimerization">
    <location>
        <begin position="3116"/>
        <end position="3596"/>
    </location>
</feature>
<feature type="modified residue" description="O-(pantetheine 4'-phosphoryl)serine" evidence="1">
    <location>
        <position position="1001"/>
    </location>
</feature>
<feature type="modified residue" description="O-(pantetheine 4'-phosphoryl)serine" evidence="1">
    <location>
        <position position="2032"/>
    </location>
</feature>
<feature type="modified residue" description="O-(pantetheine 4'-phosphoryl)serine" evidence="1">
    <location>
        <position position="3069"/>
    </location>
</feature>
<feature type="sequence conflict" description="In Ref. 1; CAA84363." evidence="3" ref="1">
    <original>N</original>
    <variation>T</variation>
    <location>
        <position position="46"/>
    </location>
</feature>
<feature type="sequence conflict" description="In Ref. 1; CAA84363." evidence="3" ref="1">
    <original>L</original>
    <variation>W</variation>
    <location>
        <position position="1293"/>
    </location>
</feature>
<feature type="sequence conflict" description="In Ref. 1; CAA84363." evidence="3" ref="1">
    <original>V</original>
    <variation>A</variation>
    <location>
        <position position="1303"/>
    </location>
</feature>
<feature type="sequence conflict" description="In Ref. 1; CAA84363." evidence="3" ref="1">
    <original>V</original>
    <variation>A</variation>
    <location>
        <position position="1324"/>
    </location>
</feature>
<feature type="sequence conflict" description="In Ref. 1; CAA84363." evidence="3" ref="1">
    <original>N</original>
    <variation>T</variation>
    <location>
        <position position="1530"/>
    </location>
</feature>
<feature type="sequence conflict" description="In Ref. 1; CAA84363." evidence="3" ref="1">
    <original>A</original>
    <variation>S</variation>
    <location>
        <position position="1533"/>
    </location>
</feature>
<feature type="sequence conflict" description="In Ref. 1; CAA84363." evidence="3" ref="1">
    <original>H</original>
    <variation>Q</variation>
    <location>
        <position position="1743"/>
    </location>
</feature>
<keyword id="KW-0045">Antibiotic biosynthesis</keyword>
<keyword id="KW-0511">Multifunctional enzyme</keyword>
<keyword id="KW-0596">Phosphopantetheine</keyword>
<keyword id="KW-0597">Phosphoprotein</keyword>
<keyword id="KW-1185">Reference proteome</keyword>
<keyword id="KW-0677">Repeat</keyword>
<keyword id="KW-0808">Transferase</keyword>
<dbReference type="EC" id="2.3.1.-"/>
<dbReference type="EMBL" id="Z34883">
    <property type="protein sequence ID" value="CAA84363.1"/>
    <property type="molecule type" value="Genomic_DNA"/>
</dbReference>
<dbReference type="EMBL" id="AL009126">
    <property type="protein sequence ID" value="CAB13714.2"/>
    <property type="molecule type" value="Genomic_DNA"/>
</dbReference>
<dbReference type="PIR" id="D69681">
    <property type="entry name" value="D69681"/>
</dbReference>
<dbReference type="RefSeq" id="NP_389713.2">
    <property type="nucleotide sequence ID" value="NC_000964.3"/>
</dbReference>
<dbReference type="RefSeq" id="WP_009967354.1">
    <property type="nucleotide sequence ID" value="NZ_OZ025638.1"/>
</dbReference>
<dbReference type="SMR" id="P94459"/>
<dbReference type="FunCoup" id="P94459">
    <property type="interactions" value="18"/>
</dbReference>
<dbReference type="STRING" id="224308.BSU18310"/>
<dbReference type="PaxDb" id="224308-BSU18310"/>
<dbReference type="EnsemblBacteria" id="CAB13714">
    <property type="protein sequence ID" value="CAB13714"/>
    <property type="gene ID" value="BSU_18310"/>
</dbReference>
<dbReference type="GeneID" id="940013"/>
<dbReference type="KEGG" id="bsu:BSU18310"/>
<dbReference type="PATRIC" id="fig|224308.43.peg.1941"/>
<dbReference type="eggNOG" id="COG1020">
    <property type="taxonomic scope" value="Bacteria"/>
</dbReference>
<dbReference type="InParanoid" id="P94459"/>
<dbReference type="OrthoDB" id="9765680at2"/>
<dbReference type="PhylomeDB" id="P94459"/>
<dbReference type="BioCyc" id="BSUB:BSU18310-MONOMER"/>
<dbReference type="Proteomes" id="UP000001570">
    <property type="component" value="Chromosome"/>
</dbReference>
<dbReference type="GO" id="GO:0031177">
    <property type="term" value="F:phosphopantetheine binding"/>
    <property type="evidence" value="ECO:0007669"/>
    <property type="project" value="InterPro"/>
</dbReference>
<dbReference type="GO" id="GO:0016740">
    <property type="term" value="F:transferase activity"/>
    <property type="evidence" value="ECO:0007669"/>
    <property type="project" value="UniProtKB-KW"/>
</dbReference>
<dbReference type="GO" id="GO:0017000">
    <property type="term" value="P:antibiotic biosynthetic process"/>
    <property type="evidence" value="ECO:0007669"/>
    <property type="project" value="UniProtKB-KW"/>
</dbReference>
<dbReference type="GO" id="GO:0008610">
    <property type="term" value="P:lipid biosynthetic process"/>
    <property type="evidence" value="ECO:0007669"/>
    <property type="project" value="UniProtKB-ARBA"/>
</dbReference>
<dbReference type="CDD" id="cd05930">
    <property type="entry name" value="A_NRPS"/>
    <property type="match status" value="2"/>
</dbReference>
<dbReference type="CDD" id="cd17656">
    <property type="entry name" value="A_NRPS_ProA"/>
    <property type="match status" value="1"/>
</dbReference>
<dbReference type="CDD" id="cd19543">
    <property type="entry name" value="DCL_NRPS"/>
    <property type="match status" value="1"/>
</dbReference>
<dbReference type="CDD" id="cd19534">
    <property type="entry name" value="E_NRPS"/>
    <property type="match status" value="1"/>
</dbReference>
<dbReference type="CDD" id="cd19531">
    <property type="entry name" value="LCL_NRPS-like"/>
    <property type="match status" value="2"/>
</dbReference>
<dbReference type="FunFam" id="3.30.300.30:FF:000010">
    <property type="entry name" value="Enterobactin synthetase component F"/>
    <property type="match status" value="2"/>
</dbReference>
<dbReference type="FunFam" id="3.30.559.10:FF:000012">
    <property type="entry name" value="Non-ribosomal peptide synthetase"/>
    <property type="match status" value="2"/>
</dbReference>
<dbReference type="FunFam" id="3.30.559.30:FF:000001">
    <property type="entry name" value="Non-ribosomal peptide synthetase"/>
    <property type="match status" value="2"/>
</dbReference>
<dbReference type="FunFam" id="3.40.50.12780:FF:000012">
    <property type="entry name" value="Non-ribosomal peptide synthetase"/>
    <property type="match status" value="2"/>
</dbReference>
<dbReference type="FunFam" id="3.40.50.980:FF:000001">
    <property type="entry name" value="Non-ribosomal peptide synthetase"/>
    <property type="match status" value="3"/>
</dbReference>
<dbReference type="FunFam" id="2.30.38.10:FF:000001">
    <property type="entry name" value="Non-ribosomal peptide synthetase PvdI"/>
    <property type="match status" value="2"/>
</dbReference>
<dbReference type="FunFam" id="1.10.1200.10:FF:000005">
    <property type="entry name" value="Nonribosomal peptide synthetase 1"/>
    <property type="match status" value="3"/>
</dbReference>
<dbReference type="Gene3D" id="3.30.300.30">
    <property type="match status" value="3"/>
</dbReference>
<dbReference type="Gene3D" id="3.40.50.980">
    <property type="match status" value="6"/>
</dbReference>
<dbReference type="Gene3D" id="1.10.1200.10">
    <property type="entry name" value="ACP-like"/>
    <property type="match status" value="3"/>
</dbReference>
<dbReference type="Gene3D" id="3.30.559.10">
    <property type="entry name" value="Chloramphenicol acetyltransferase-like domain"/>
    <property type="match status" value="4"/>
</dbReference>
<dbReference type="Gene3D" id="2.30.38.10">
    <property type="entry name" value="Luciferase, Domain 3"/>
    <property type="match status" value="3"/>
</dbReference>
<dbReference type="Gene3D" id="3.30.559.30">
    <property type="entry name" value="Nonribosomal peptide synthetase, condensation domain"/>
    <property type="match status" value="4"/>
</dbReference>
<dbReference type="InterPro" id="IPR010071">
    <property type="entry name" value="AA_adenyl_dom"/>
</dbReference>
<dbReference type="InterPro" id="IPR036736">
    <property type="entry name" value="ACP-like_sf"/>
</dbReference>
<dbReference type="InterPro" id="IPR025110">
    <property type="entry name" value="AMP-bd_C"/>
</dbReference>
<dbReference type="InterPro" id="IPR045851">
    <property type="entry name" value="AMP-bd_C_sf"/>
</dbReference>
<dbReference type="InterPro" id="IPR020845">
    <property type="entry name" value="AMP-binding_CS"/>
</dbReference>
<dbReference type="InterPro" id="IPR000873">
    <property type="entry name" value="AMP-dep_synth/lig_dom"/>
</dbReference>
<dbReference type="InterPro" id="IPR023213">
    <property type="entry name" value="CAT-like_dom_sf"/>
</dbReference>
<dbReference type="InterPro" id="IPR001242">
    <property type="entry name" value="Condensatn"/>
</dbReference>
<dbReference type="InterPro" id="IPR010060">
    <property type="entry name" value="NRPS_synth"/>
</dbReference>
<dbReference type="InterPro" id="IPR020806">
    <property type="entry name" value="PKS_PP-bd"/>
</dbReference>
<dbReference type="InterPro" id="IPR009081">
    <property type="entry name" value="PP-bd_ACP"/>
</dbReference>
<dbReference type="InterPro" id="IPR006162">
    <property type="entry name" value="Ppantetheine_attach_site"/>
</dbReference>
<dbReference type="NCBIfam" id="TIGR01733">
    <property type="entry name" value="AA-adenyl-dom"/>
    <property type="match status" value="3"/>
</dbReference>
<dbReference type="NCBIfam" id="TIGR01720">
    <property type="entry name" value="NRPS-para261"/>
    <property type="match status" value="1"/>
</dbReference>
<dbReference type="NCBIfam" id="NF003417">
    <property type="entry name" value="PRK04813.1"/>
    <property type="match status" value="3"/>
</dbReference>
<dbReference type="PANTHER" id="PTHR45527:SF1">
    <property type="entry name" value="FATTY ACID SYNTHASE"/>
    <property type="match status" value="1"/>
</dbReference>
<dbReference type="PANTHER" id="PTHR45527">
    <property type="entry name" value="NONRIBOSOMAL PEPTIDE SYNTHETASE"/>
    <property type="match status" value="1"/>
</dbReference>
<dbReference type="Pfam" id="PF00501">
    <property type="entry name" value="AMP-binding"/>
    <property type="match status" value="3"/>
</dbReference>
<dbReference type="Pfam" id="PF13193">
    <property type="entry name" value="AMP-binding_C"/>
    <property type="match status" value="3"/>
</dbReference>
<dbReference type="Pfam" id="PF00668">
    <property type="entry name" value="Condensation"/>
    <property type="match status" value="4"/>
</dbReference>
<dbReference type="Pfam" id="PF00550">
    <property type="entry name" value="PP-binding"/>
    <property type="match status" value="3"/>
</dbReference>
<dbReference type="SMART" id="SM00823">
    <property type="entry name" value="PKS_PP"/>
    <property type="match status" value="2"/>
</dbReference>
<dbReference type="SUPFAM" id="SSF56801">
    <property type="entry name" value="Acetyl-CoA synthetase-like"/>
    <property type="match status" value="3"/>
</dbReference>
<dbReference type="SUPFAM" id="SSF47336">
    <property type="entry name" value="ACP-like"/>
    <property type="match status" value="3"/>
</dbReference>
<dbReference type="SUPFAM" id="SSF52777">
    <property type="entry name" value="CoA-dependent acyltransferases"/>
    <property type="match status" value="8"/>
</dbReference>
<dbReference type="PROSITE" id="PS00455">
    <property type="entry name" value="AMP_BINDING"/>
    <property type="match status" value="3"/>
</dbReference>
<dbReference type="PROSITE" id="PS50075">
    <property type="entry name" value="CARRIER"/>
    <property type="match status" value="3"/>
</dbReference>
<dbReference type="PROSITE" id="PS00012">
    <property type="entry name" value="PHOSPHOPANTETHEINE"/>
    <property type="match status" value="1"/>
</dbReference>
<comment type="function">
    <text evidence="2">This protein is a multifunctional enzyme, able to activate and polymerize the amino acids Pro, Gln and Tyr as part of the biosynthesis of the lipopeptide antibiotic plipastatin. The Tyr residue is further epimerized to the D-isomer form. The activation sites for these amino acids consist of individual domains.</text>
</comment>
<comment type="cofactor">
    <cofactor evidence="3">
        <name>pantetheine 4'-phosphate</name>
        <dbReference type="ChEBI" id="CHEBI:47942"/>
    </cofactor>
    <text evidence="3">Binds 3 phosphopantetheines covalently.</text>
</comment>
<comment type="similarity">
    <text evidence="3">Belongs to the ATP-dependent AMP-binding enzyme family.</text>
</comment>
<sequence>MTKANSIQDIYPLSYMQEGMLFHSLLQKDSQAYVEQASFTIEGKVNPQFFQNSINALVERHDIFRTIFISQNVSSPQQVVLRERNVIVLEEDITHLNEAEQSQFIEQWKEKDRDRGFHLQKDVLMRIALIQTGESQYSCIWTFHHIMMDGWCLSIVLKEFLHIYASYVNASPITLEPVQPYGKYIKWLMEQDKEQAVSYWDHYLSGHEQQTVLPKQKKTKGKSRQEHVTFSFSKEESSRLSELAAREEVTLSTIFHTIWGILLQKYNNNDDAVFGSVISGRPAEIEGIEHMVGLFINTMPVRVQGAKTPFLQLIKDMQKDRLAAEAYSYHPLYEIQSRSAVKQGLIDHILVFENYPVQQEIQMLNKQEHASDLFQIHNFTVADETNYSFYLMVAPGEEIHIKMNYDAEQHDRSFVLSVKEHLLNAVSQILNNPNLPPEEIDITTDTEKRQLIGEITDQTPVYETIHAMFEKQAEKTPDAHAVIDQACSLTYRELNKAANRLARHLRMKGVVRQEPVAIMMERSAAFITGVLGILKAGGAIVPVDPHYPADRIRYILHDCGCSHVVSQAHLPSSLEDNYIITHPEDIESKVDGSNIKSVNNADDLLYMIYTSGTTGKPKGVQFEHRNMANLLKFEYTHSGIDFEADVLQFATPSFDVCYQEIFSALLKGGTLHIVPEAIKRDVPQLFAFINKHQTNIVFLPTAFIKMIFSERELANSFPDGVKHLIAAGEQLMISDLFQDVLRKRGIHLHNHYGPSETHVVSTYTIHPGDPIPELPPIGKPIGCTDLYILNHQKQLQPCGVPGELYISGASVARGYVNHDKLTSDKFSSDPFKPDVIMYRTGDLARRLEDGNIEYIGRADNQVKIRGYRIEPQEIEVTLMNHPDISEAAILIWQDQNGEHELCAYYCSVQKLNTIDLRSYMASELPEYMIPAKWIWVDSIPLTPNGKVDRAALPEPDASISGNPYTAPRNLLEAKLSQLFEDVLKNGHIGIQDNFFDNGGHSLKATVLMSRIAKEFHVQVSLKDIFAHPTVEGLALIIREAEQNLYAAIEPAEKRDTYPVSSAQKRIYVLQQLDEGVAYNMPAVLELEGALDVAKLSAVCKELISRHEPLRTSFVSGADDEPVQRIHTEVPFTLSKETTIEGFVRPFDLSQAPLFRAGLIEVSNEKHVLLVDMHHIISDGVSVQLLIREFTDLYANRQLKPLRIQYKDYAVWQQKFKKGDSYQKQETYWQQQFSGDLPILELPTDKRRPAERQFIGGKVTFQLDKEITARIKRLAHKNRSTLYMTLLALYSAFLSRLSGQDDIVIGSPIAGRPHADLEAVLGMFVNTLALRTRPAGNKTFEEFLKEVRQTALEAYEHQDYPFEELVDKLGVQREMSRNPLFDTTLVLQNMEQQKLKMNDVQLQWNDLEHPISKFDISLYVTEHDSELFCQFEYSTALFEKETIQRWASLFTTLVEHTAASPETELDNIPILTKEEERDFIESCHLFEETGYSMNQTLHYALEQQAEKTPDQAAVIFEDGVMTYKELNEQANRIAWELIGRGVKPETTVAIIGKRSPEMLLGIYGILKAGGAYLPIDPDYPEERISFLLEDSGTNILLLQSAGLHVPEFTGEIVYLNQTNSGLAHRLSNPNVDVLPQSLAYVIYTSGSTGMPKGVEIEHRSAVNFLNSLQSRYQLKHSDMIMHKTSYSFDASIWELFWWPYAGASVYLLPQGGEKEPEVIAKAIEEQKITAMHFVPSMLHAFLEHIKYRSVPIKTNRLKRVFSGGEQLGTHLVSRFYELLPNVSITNSYGPTEATVEAAFFDCPPHEKLERIPIGKPVHHVRLYLLNQNQRMLPVGCIGELYIAGAGVARGYLNRPALTEERFLEDPFYPGERMYKTGDVARWLPDGNVEFLGRTDDQVKIRGYRIEPGEIEAALRSIEGVREAAVTVRTDSGEPELCAYVEGLQRNEVRAQLERLLPGYMVPAYMIEMEQWPVTPSGKLDRNALPAPGGAADAETYTAPRNVTEMKLSQLWEDVLKNGPVGIHDNFFDRGGHSLKATALVSRITKEFDVQVPLKDVFAHPTVEGLATVIREGTDSPYEAIKPAEKQETYPVSSAQKRIYVLQQLEDGGTGYNMPAVLELEGKLNPERMDRAFQELIKRHESLRTSFEQDEGGDPVQRIHDEVPFTLQTTVLGARTEQEAAAAFIKPFDLSQAPLFRAQIVKVSDERHLLLVDMHHIISDGVSVNILIQEFGELYNNRKLPALRIQYKDYAVWQEGFKTGDAYKMQEAYWLKQLEGELPVLDLPADHARPPVRSFAGDKVSFTLEPEVASGLHKLARENGSTLYMVLLAAYTAFLSRLSGQEDIIVGSPIAGRPHKDLEPILGMFVNTLALRTRPEGGKPFVQYLQEVRETALEAFEHQNYPFEELVDKLELTRDMSRNPVFDAMLVVQNNDYEPLHLHDLQMKPAQVSHLVSKFDLTLQASEGDGNIHFLFEYSTALFEKTTIERWASHLTNVLSIIGKNPKVTLNHIDILTQEERHQLLNEFNTGQANQYGVQTISQLFEQQAARTPKASALVSGDKTLTYQELDEWSNGIARALRSRGVKPDTPVGIMMHRSFSMIASILGVWKAGGCYVPIDPEYPKERKRYILSDSGTKLLMTINEADLGVLADFEGEILTIESVEEDDKSPLPQMSSAHHLAYIIYTSGTTGRPKGVMVEHKGIANTLQWRRNAYAFNETDTILQLFSFSFDGFITSMFTPLLSGAKAVLLHEEEAKDILAIKHQLSRQRITHMIIVPVLYRALLDVVQPEDVKTLRVVTLAGEAADRELIARSLAICPHTELANEYGPTENSVATTVMRHMEKQAYVSIGQPIDGTQVLILNSNHQLQPIGVAGELCIAGTGLARGYVNLPELTERAFTQNPFKPEARMYRTGDAARWMADGTLEYLGRIDDQVKIRGYRVETKEIESVIRCIKGVKDAAVVAHVTASGQTELSAYVVTKPGLSTNAVRSELQNKLPVFMHPAFIEKLDSLPLSPNGKLDRGALPKPVYNHEGERPFLPPSSKMEQILADIWKEVLGAEKIGTADSFFELGGDSIKALQVSARLHRIGKQMAVKDLFSHPTIQELAAYIRDSDTSSSQAAVEGDVQWSPVQKWFLSQDIKEKHHFNQSVMLHRSTSVQEDALRKTLKAITCHHDALRMVFTQNEQGKWDQYNRPLSHSDDALYGLQMIDLSAPDGTDGNRPYEPLIKRHVLDIQQKMDLKNGPLLQAGLFHTIDGDFLFLSAHHLVVDGISWRVLLEDLALGYRQAAGGEDIKLPPKTSSFKAYAKKLSDYAESQQLMKQLKYWREAEEYQTEALPFDQIDGTRAHEGQRSTISFTLNDKETAALLKDANSAYNTDTQDMLLASVILALRHWTNQSAFKLSLEGHGREDVLKGIDVSRTIGWFTAIYPLLIKLNADLPDSEESMVHVLKTTKDTLRRVPDKGFGYGVIKYLTPPGKKDINFTGAPEISFNYLGQFESGRTAEVPEEDAFSFSPLGAGGDISTTWNREQSLDISAIAAEGKLTVNMTYDNARFQRKTIEQLSETCRQFLLQLIEHCQNKSETEKTISDFDDQELTEDALQEIADMLSFH</sequence>